<comment type="function">
    <text evidence="1">Exhibits a very high intrinsic GTPase hydrolysis rate. Involved in the addition of a carboxymethylaminomethyl (cmnm) group at the wobble position (U34) of certain tRNAs, forming tRNA-cmnm(5)s(2)U34.</text>
</comment>
<comment type="cofactor">
    <cofactor evidence="1">
        <name>K(+)</name>
        <dbReference type="ChEBI" id="CHEBI:29103"/>
    </cofactor>
    <text evidence="1">Binds 1 potassium ion per subunit.</text>
</comment>
<comment type="subunit">
    <text evidence="1">Homodimer. Heterotetramer of two MnmE and two MnmG subunits.</text>
</comment>
<comment type="subcellular location">
    <subcellularLocation>
        <location evidence="1">Cytoplasm</location>
    </subcellularLocation>
</comment>
<comment type="similarity">
    <text evidence="1">Belongs to the TRAFAC class TrmE-Era-EngA-EngB-Septin-like GTPase superfamily. TrmE GTPase family.</text>
</comment>
<evidence type="ECO:0000255" key="1">
    <source>
        <dbReference type="HAMAP-Rule" id="MF_00379"/>
    </source>
</evidence>
<name>MNME_MARMM</name>
<organism>
    <name type="scientific">Maricaulis maris (strain MCS10)</name>
    <name type="common">Caulobacter maris</name>
    <dbReference type="NCBI Taxonomy" id="394221"/>
    <lineage>
        <taxon>Bacteria</taxon>
        <taxon>Pseudomonadati</taxon>
        <taxon>Pseudomonadota</taxon>
        <taxon>Alphaproteobacteria</taxon>
        <taxon>Maricaulales</taxon>
        <taxon>Maricaulaceae</taxon>
        <taxon>Maricaulis</taxon>
    </lineage>
</organism>
<gene>
    <name evidence="1" type="primary">mnmE</name>
    <name evidence="1" type="synonym">trmE</name>
    <name type="ordered locus">Mmar10_2964</name>
</gene>
<protein>
    <recommendedName>
        <fullName evidence="1">tRNA modification GTPase MnmE</fullName>
        <ecNumber evidence="1">3.6.-.-</ecNumber>
    </recommendedName>
</protein>
<proteinExistence type="inferred from homology"/>
<reference key="1">
    <citation type="submission" date="2006-08" db="EMBL/GenBank/DDBJ databases">
        <title>Complete sequence of Maricaulis maris MCS10.</title>
        <authorList>
            <consortium name="US DOE Joint Genome Institute"/>
            <person name="Copeland A."/>
            <person name="Lucas S."/>
            <person name="Lapidus A."/>
            <person name="Barry K."/>
            <person name="Detter J.C."/>
            <person name="Glavina del Rio T."/>
            <person name="Hammon N."/>
            <person name="Israni S."/>
            <person name="Dalin E."/>
            <person name="Tice H."/>
            <person name="Pitluck S."/>
            <person name="Saunders E."/>
            <person name="Brettin T."/>
            <person name="Bruce D."/>
            <person name="Han C."/>
            <person name="Tapia R."/>
            <person name="Gilna P."/>
            <person name="Schmutz J."/>
            <person name="Larimer F."/>
            <person name="Land M."/>
            <person name="Hauser L."/>
            <person name="Kyrpides N."/>
            <person name="Mikhailova N."/>
            <person name="Viollier P."/>
            <person name="Stephens C."/>
            <person name="Richardson P."/>
        </authorList>
    </citation>
    <scope>NUCLEOTIDE SEQUENCE [LARGE SCALE GENOMIC DNA]</scope>
    <source>
        <strain>MCS10</strain>
    </source>
</reference>
<accession>Q0AKE8</accession>
<sequence>MNTTVYALATPAGRSGVAVIRLSGGGAGGMLDALAGLPRPQPRMATLRALRDSGGSVMDRGLVLWFPGPGSFTGEDSAEFHVHGGPAVIDAVLSALDEAGAHPAEAGEFTRRAFENEKIDLTEAEGLADLIDAETEGQRVQALSQMSGSLRRLYDGWRDALITAMASIEGEIDFPDEADVPDALSHAAYEPLSELIGSMFEHLDDGRRGERIRIGFSIVLIGAPNAGKSSLLNCLARRDAAIVTDIPGTTRDIVEVQLTLGGFPVVISDTAGLREAVDAIEAEGVRRALDRAEHADLRIGVADARSDEELVDLEGRLTDGDLLVLNKLDLGLVSERDGAYRLSAKSGDGVEALEARIEQIVRDRLSVREMPALSRVRHRRAVETALEALSRCRDQLADAPELAGEDARLAVRALESLTGRVDVEDILDRVFSQFCIGK</sequence>
<dbReference type="EC" id="3.6.-.-" evidence="1"/>
<dbReference type="EMBL" id="CP000449">
    <property type="protein sequence ID" value="ABI67245.1"/>
    <property type="molecule type" value="Genomic_DNA"/>
</dbReference>
<dbReference type="RefSeq" id="WP_011644889.1">
    <property type="nucleotide sequence ID" value="NC_008347.1"/>
</dbReference>
<dbReference type="SMR" id="Q0AKE8"/>
<dbReference type="STRING" id="394221.Mmar10_2964"/>
<dbReference type="KEGG" id="mmr:Mmar10_2964"/>
<dbReference type="eggNOG" id="COG0486">
    <property type="taxonomic scope" value="Bacteria"/>
</dbReference>
<dbReference type="HOGENOM" id="CLU_019624_3_1_5"/>
<dbReference type="OrthoDB" id="9805918at2"/>
<dbReference type="Proteomes" id="UP000001964">
    <property type="component" value="Chromosome"/>
</dbReference>
<dbReference type="GO" id="GO:0005737">
    <property type="term" value="C:cytoplasm"/>
    <property type="evidence" value="ECO:0007669"/>
    <property type="project" value="UniProtKB-SubCell"/>
</dbReference>
<dbReference type="GO" id="GO:0005525">
    <property type="term" value="F:GTP binding"/>
    <property type="evidence" value="ECO:0007669"/>
    <property type="project" value="UniProtKB-UniRule"/>
</dbReference>
<dbReference type="GO" id="GO:0003924">
    <property type="term" value="F:GTPase activity"/>
    <property type="evidence" value="ECO:0007669"/>
    <property type="project" value="UniProtKB-UniRule"/>
</dbReference>
<dbReference type="GO" id="GO:0046872">
    <property type="term" value="F:metal ion binding"/>
    <property type="evidence" value="ECO:0007669"/>
    <property type="project" value="UniProtKB-KW"/>
</dbReference>
<dbReference type="GO" id="GO:0030488">
    <property type="term" value="P:tRNA methylation"/>
    <property type="evidence" value="ECO:0007669"/>
    <property type="project" value="TreeGrafter"/>
</dbReference>
<dbReference type="GO" id="GO:0002098">
    <property type="term" value="P:tRNA wobble uridine modification"/>
    <property type="evidence" value="ECO:0007669"/>
    <property type="project" value="TreeGrafter"/>
</dbReference>
<dbReference type="CDD" id="cd04164">
    <property type="entry name" value="trmE"/>
    <property type="match status" value="1"/>
</dbReference>
<dbReference type="CDD" id="cd14858">
    <property type="entry name" value="TrmE_N"/>
    <property type="match status" value="1"/>
</dbReference>
<dbReference type="FunFam" id="3.30.1360.120:FF:000007">
    <property type="entry name" value="tRNA modification GTPase GTPBP3, mitochondrial"/>
    <property type="match status" value="1"/>
</dbReference>
<dbReference type="Gene3D" id="3.40.50.300">
    <property type="entry name" value="P-loop containing nucleotide triphosphate hydrolases"/>
    <property type="match status" value="1"/>
</dbReference>
<dbReference type="Gene3D" id="3.30.1360.120">
    <property type="entry name" value="Probable tRNA modification gtpase trme, domain 1"/>
    <property type="match status" value="1"/>
</dbReference>
<dbReference type="Gene3D" id="1.20.120.430">
    <property type="entry name" value="tRNA modification GTPase MnmE domain 2"/>
    <property type="match status" value="1"/>
</dbReference>
<dbReference type="HAMAP" id="MF_00379">
    <property type="entry name" value="GTPase_MnmE"/>
    <property type="match status" value="1"/>
</dbReference>
<dbReference type="InterPro" id="IPR031168">
    <property type="entry name" value="G_TrmE"/>
</dbReference>
<dbReference type="InterPro" id="IPR006073">
    <property type="entry name" value="GTP-bd"/>
</dbReference>
<dbReference type="InterPro" id="IPR018948">
    <property type="entry name" value="GTP-bd_TrmE_N"/>
</dbReference>
<dbReference type="InterPro" id="IPR004520">
    <property type="entry name" value="GTPase_MnmE"/>
</dbReference>
<dbReference type="InterPro" id="IPR027368">
    <property type="entry name" value="MnmE_dom2"/>
</dbReference>
<dbReference type="InterPro" id="IPR025867">
    <property type="entry name" value="MnmE_helical"/>
</dbReference>
<dbReference type="InterPro" id="IPR027417">
    <property type="entry name" value="P-loop_NTPase"/>
</dbReference>
<dbReference type="InterPro" id="IPR005225">
    <property type="entry name" value="Small_GTP-bd"/>
</dbReference>
<dbReference type="InterPro" id="IPR027266">
    <property type="entry name" value="TrmE/GcvT_dom1"/>
</dbReference>
<dbReference type="NCBIfam" id="TIGR00450">
    <property type="entry name" value="mnmE_trmE_thdF"/>
    <property type="match status" value="1"/>
</dbReference>
<dbReference type="NCBIfam" id="NF003661">
    <property type="entry name" value="PRK05291.1-3"/>
    <property type="match status" value="1"/>
</dbReference>
<dbReference type="NCBIfam" id="TIGR00231">
    <property type="entry name" value="small_GTP"/>
    <property type="match status" value="1"/>
</dbReference>
<dbReference type="PANTHER" id="PTHR42714">
    <property type="entry name" value="TRNA MODIFICATION GTPASE GTPBP3"/>
    <property type="match status" value="1"/>
</dbReference>
<dbReference type="PANTHER" id="PTHR42714:SF2">
    <property type="entry name" value="TRNA MODIFICATION GTPASE GTPBP3, MITOCHONDRIAL"/>
    <property type="match status" value="1"/>
</dbReference>
<dbReference type="Pfam" id="PF01926">
    <property type="entry name" value="MMR_HSR1"/>
    <property type="match status" value="1"/>
</dbReference>
<dbReference type="Pfam" id="PF12631">
    <property type="entry name" value="MnmE_helical"/>
    <property type="match status" value="1"/>
</dbReference>
<dbReference type="Pfam" id="PF10396">
    <property type="entry name" value="TrmE_N"/>
    <property type="match status" value="1"/>
</dbReference>
<dbReference type="SUPFAM" id="SSF52540">
    <property type="entry name" value="P-loop containing nucleoside triphosphate hydrolases"/>
    <property type="match status" value="1"/>
</dbReference>
<dbReference type="SUPFAM" id="SSF116878">
    <property type="entry name" value="TrmE connector domain"/>
    <property type="match status" value="1"/>
</dbReference>
<dbReference type="PROSITE" id="PS51709">
    <property type="entry name" value="G_TRME"/>
    <property type="match status" value="1"/>
</dbReference>
<feature type="chain" id="PRO_0000345826" description="tRNA modification GTPase MnmE">
    <location>
        <begin position="1"/>
        <end position="438"/>
    </location>
</feature>
<feature type="domain" description="TrmE-type G">
    <location>
        <begin position="215"/>
        <end position="362"/>
    </location>
</feature>
<feature type="binding site" evidence="1">
    <location>
        <position position="21"/>
    </location>
    <ligand>
        <name>(6S)-5-formyl-5,6,7,8-tetrahydrofolate</name>
        <dbReference type="ChEBI" id="CHEBI:57457"/>
    </ligand>
</feature>
<feature type="binding site" evidence="1">
    <location>
        <position position="79"/>
    </location>
    <ligand>
        <name>(6S)-5-formyl-5,6,7,8-tetrahydrofolate</name>
        <dbReference type="ChEBI" id="CHEBI:57457"/>
    </ligand>
</feature>
<feature type="binding site" evidence="1">
    <location>
        <position position="118"/>
    </location>
    <ligand>
        <name>(6S)-5-formyl-5,6,7,8-tetrahydrofolate</name>
        <dbReference type="ChEBI" id="CHEBI:57457"/>
    </ligand>
</feature>
<feature type="binding site" evidence="1">
    <location>
        <begin position="225"/>
        <end position="230"/>
    </location>
    <ligand>
        <name>GTP</name>
        <dbReference type="ChEBI" id="CHEBI:37565"/>
    </ligand>
</feature>
<feature type="binding site" evidence="1">
    <location>
        <position position="225"/>
    </location>
    <ligand>
        <name>K(+)</name>
        <dbReference type="ChEBI" id="CHEBI:29103"/>
    </ligand>
</feature>
<feature type="binding site" evidence="1">
    <location>
        <position position="229"/>
    </location>
    <ligand>
        <name>Mg(2+)</name>
        <dbReference type="ChEBI" id="CHEBI:18420"/>
    </ligand>
</feature>
<feature type="binding site" evidence="1">
    <location>
        <begin position="244"/>
        <end position="250"/>
    </location>
    <ligand>
        <name>GTP</name>
        <dbReference type="ChEBI" id="CHEBI:37565"/>
    </ligand>
</feature>
<feature type="binding site" evidence="1">
    <location>
        <position position="244"/>
    </location>
    <ligand>
        <name>K(+)</name>
        <dbReference type="ChEBI" id="CHEBI:29103"/>
    </ligand>
</feature>
<feature type="binding site" evidence="1">
    <location>
        <position position="246"/>
    </location>
    <ligand>
        <name>K(+)</name>
        <dbReference type="ChEBI" id="CHEBI:29103"/>
    </ligand>
</feature>
<feature type="binding site" evidence="1">
    <location>
        <position position="249"/>
    </location>
    <ligand>
        <name>K(+)</name>
        <dbReference type="ChEBI" id="CHEBI:29103"/>
    </ligand>
</feature>
<feature type="binding site" evidence="1">
    <location>
        <position position="250"/>
    </location>
    <ligand>
        <name>Mg(2+)</name>
        <dbReference type="ChEBI" id="CHEBI:18420"/>
    </ligand>
</feature>
<feature type="binding site" evidence="1">
    <location>
        <begin position="269"/>
        <end position="272"/>
    </location>
    <ligand>
        <name>GTP</name>
        <dbReference type="ChEBI" id="CHEBI:37565"/>
    </ligand>
</feature>
<feature type="binding site" evidence="1">
    <location>
        <position position="438"/>
    </location>
    <ligand>
        <name>(6S)-5-formyl-5,6,7,8-tetrahydrofolate</name>
        <dbReference type="ChEBI" id="CHEBI:57457"/>
    </ligand>
</feature>
<keyword id="KW-0963">Cytoplasm</keyword>
<keyword id="KW-0342">GTP-binding</keyword>
<keyword id="KW-0378">Hydrolase</keyword>
<keyword id="KW-0460">Magnesium</keyword>
<keyword id="KW-0479">Metal-binding</keyword>
<keyword id="KW-0547">Nucleotide-binding</keyword>
<keyword id="KW-0630">Potassium</keyword>
<keyword id="KW-1185">Reference proteome</keyword>
<keyword id="KW-0819">tRNA processing</keyword>